<sequence>MPRSCCSRSGALLLALLLQASMEVRGWCLESSQCQDLTTESNLLECIRACKPDLSAETPMFPGNGDEQPLTENPRKYVMGHFRWDRFGRRNSSSSGSSGAGQKREDVSAGEDCGPLPEGGPEPRSDGAKPGPREGKRSYSMEHFRWGKPVGKKRRPVKVYPNGAEDESAEAFPLEFKRELTGQRLREGDGPDGPADDGAGAQADLEHSLLVAAEKKDEGPYRMEHFRWGSPPKDKRYGGFMTSEKSQTPLVTLFKNAIIKNAYKKGE</sequence>
<proteinExistence type="evidence at protein level"/>
<comment type="function">
    <molecule>Corticotropin</molecule>
    <text>Stimulates the adrenal glands to release cortisol.</text>
</comment>
<comment type="function">
    <molecule>Melanocyte-stimulating hormone alpha</molecule>
    <text>Anorexigenic peptide. Increases the pigmentation of skin by increasing melanin production in melanocytes.</text>
</comment>
<comment type="function">
    <molecule>Melanocyte-stimulating hormone beta</molecule>
    <text>Increases the pigmentation of skin by increasing melanin production in melanocytes.</text>
</comment>
<comment type="function">
    <molecule>Beta-endorphin</molecule>
    <text>Endogenous orexigenic opiate.</text>
</comment>
<comment type="function">
    <molecule>Met-enkephalin</molecule>
    <text>Endogenous opiate.</text>
</comment>
<comment type="interaction">
    <interactant intactId="EBI-12219503">
        <id>P01189</id>
    </interactant>
    <interactant intactId="EBI-11096309">
        <id>Q9NYB9-2</id>
        <label>ABI2</label>
    </interactant>
    <organismsDiffer>false</organismsDiffer>
    <experiments>3</experiments>
</comment>
<comment type="interaction">
    <interactant intactId="EBI-12219503">
        <id>P01189</id>
    </interactant>
    <interactant intactId="EBI-8643161">
        <id>Q9NX04</id>
        <label>AIRIM</label>
    </interactant>
    <organismsDiffer>false</organismsDiffer>
    <experiments>3</experiments>
</comment>
<comment type="interaction">
    <interactant intactId="EBI-12219503">
        <id>P01189</id>
    </interactant>
    <interactant intactId="EBI-3923949">
        <id>Q8N8Y2</id>
        <label>ATP6V0D2</label>
    </interactant>
    <organismsDiffer>false</organismsDiffer>
    <experiments>3</experiments>
</comment>
<comment type="interaction">
    <interactant intactId="EBI-12219503">
        <id>P01189</id>
    </interactant>
    <interactant intactId="EBI-17508719">
        <id>Q7RTU4</id>
        <label>BHLHA9</label>
    </interactant>
    <organismsDiffer>false</organismsDiffer>
    <experiments>3</experiments>
</comment>
<comment type="interaction">
    <interactant intactId="EBI-12219503">
        <id>P01189</id>
    </interactant>
    <interactant intactId="EBI-10171570">
        <id>Q68D86</id>
        <label>CCDC102B</label>
    </interactant>
    <organismsDiffer>false</organismsDiffer>
    <experiments>3</experiments>
</comment>
<comment type="interaction">
    <interactant intactId="EBI-12219503">
        <id>P01189</id>
    </interactant>
    <interactant intactId="EBI-12001340">
        <id>P62508-3</id>
        <label>ESRRG</label>
    </interactant>
    <organismsDiffer>false</organismsDiffer>
    <experiments>3</experiments>
</comment>
<comment type="interaction">
    <interactant intactId="EBI-12219503">
        <id>P01189</id>
    </interactant>
    <interactant intactId="EBI-748515">
        <id>Q8IVS8</id>
        <label>GLYCTK</label>
    </interactant>
    <organismsDiffer>false</organismsDiffer>
    <experiments>3</experiments>
</comment>
<comment type="interaction">
    <interactant intactId="EBI-12219503">
        <id>P01189</id>
    </interactant>
    <interactant intactId="EBI-6163836">
        <id>Q7Z4H3</id>
        <label>HDDC2</label>
    </interactant>
    <organismsDiffer>false</organismsDiffer>
    <experiments>3</experiments>
</comment>
<comment type="interaction">
    <interactant intactId="EBI-12219503">
        <id>P01189</id>
    </interactant>
    <interactant intactId="EBI-7116203">
        <id>O75031</id>
        <label>HSF2BP</label>
    </interactant>
    <organismsDiffer>false</organismsDiffer>
    <experiments>6</experiments>
</comment>
<comment type="interaction">
    <interactant intactId="EBI-12219503">
        <id>P01189</id>
    </interactant>
    <interactant intactId="EBI-739890">
        <id>Q9P2K6</id>
        <label>KLHL42</label>
    </interactant>
    <organismsDiffer>false</organismsDiffer>
    <experiments>3</experiments>
</comment>
<comment type="interaction">
    <interactant intactId="EBI-12219503">
        <id>P01189</id>
    </interactant>
    <interactant intactId="EBI-2340269">
        <id>Q13064</id>
        <label>MKRN3</label>
    </interactant>
    <organismsDiffer>false</organismsDiffer>
    <experiments>3</experiments>
</comment>
<comment type="interaction">
    <interactant intactId="EBI-12219503">
        <id>P01189</id>
    </interactant>
    <interactant intactId="EBI-10271199">
        <id>Q8NI38</id>
        <label>NFKBID</label>
    </interactant>
    <organismsDiffer>false</organismsDiffer>
    <experiments>3</experiments>
</comment>
<comment type="interaction">
    <interactant intactId="EBI-12219503">
        <id>P01189</id>
    </interactant>
    <interactant intactId="EBI-741158">
        <id>Q96HA8</id>
        <label>NTAQ1</label>
    </interactant>
    <organismsDiffer>false</organismsDiffer>
    <experiments>3</experiments>
</comment>
<comment type="interaction">
    <interactant intactId="EBI-12219503">
        <id>P01189</id>
    </interactant>
    <interactant intactId="EBI-12049527">
        <id>Q9UMX2-2</id>
        <label>OAZ3</label>
    </interactant>
    <organismsDiffer>false</organismsDiffer>
    <experiments>3</experiments>
</comment>
<comment type="interaction">
    <interactant intactId="EBI-12219503">
        <id>P01189</id>
    </interactant>
    <interactant intactId="EBI-3921347">
        <id>P51687</id>
        <label>SUOX</label>
    </interactant>
    <organismsDiffer>false</organismsDiffer>
    <experiments>3</experiments>
</comment>
<comment type="interaction">
    <interactant intactId="EBI-12219503">
        <id>P01189</id>
    </interactant>
    <interactant intactId="EBI-2932492">
        <id>Q99757</id>
        <label>TXN2</label>
    </interactant>
    <organismsDiffer>false</organismsDiffer>
    <experiments>3</experiments>
</comment>
<comment type="subcellular location">
    <subcellularLocation>
        <location evidence="3">Secreted</location>
    </subcellularLocation>
    <text evidence="3">Melanocyte-stimulating hormone alpha and beta-endorphin are stored in separate granules in hypothalamic POMC neurons, suggesting that secretion may be under the control of different regulatory mechanisms.</text>
</comment>
<comment type="tissue specificity">
    <text>ACTH and MSH are produced by the pituitary gland.</text>
</comment>
<comment type="PTM">
    <text evidence="9">Specific enzymatic cleavages at paired basic residues yield the different active peptides.</text>
</comment>
<comment type="PTM">
    <text>O-glycosylated; reducing sugar is probably N-acetylgalactosamine.</text>
</comment>
<comment type="disease" evidence="7">
    <disease id="DI-01221">
        <name>Obesity</name>
        <acronym>OBESITY</acronym>
        <description>A condition characterized by an increase of body weight beyond the limitation of skeletal and physical requirements, as the result of excessive accumulation of body fat.</description>
        <dbReference type="MIM" id="601665"/>
    </disease>
    <text>Disease susceptibility may be associated with variants affecting the gene represented in this entry.</text>
</comment>
<comment type="disease" evidence="14">
    <disease id="DI-02211">
        <name>Obesity, early-onset, with adrenal insufficiency and red hair</name>
        <acronym>OBAIRH</acronym>
        <description>An autosomal recessive disorder characterized by early-onset obesity due to severe hyperphagia, pigmentary abnormalities, mainly pale skin and red hair, and secondary hypocortisolism.</description>
        <dbReference type="MIM" id="609734"/>
    </disease>
    <text>The disease is caused by variants affecting the gene represented in this entry.</text>
</comment>
<comment type="similarity">
    <text evidence="16">Belongs to the POMC family.</text>
</comment>
<comment type="online information" name="Wikipedia">
    <link uri="https://en.wikipedia.org/wiki/Melanocyte-stimulating_hormone"/>
    <text>Melanocyte-stimulating hormone entry</text>
</comment>
<keyword id="KW-0002">3D-structure</keyword>
<keyword id="KW-0007">Acetylation</keyword>
<keyword id="KW-0027">Amidation</keyword>
<keyword id="KW-0165">Cleavage on pair of basic residues</keyword>
<keyword id="KW-0903">Direct protein sequencing</keyword>
<keyword id="KW-1015">Disulfide bond</keyword>
<keyword id="KW-0257">Endorphin</keyword>
<keyword id="KW-0325">Glycoprotein</keyword>
<keyword id="KW-0372">Hormone</keyword>
<keyword id="KW-0550">Obesity</keyword>
<keyword id="KW-0597">Phosphoprotein</keyword>
<keyword id="KW-1267">Proteomics identification</keyword>
<keyword id="KW-1185">Reference proteome</keyword>
<keyword id="KW-0964">Secreted</keyword>
<keyword id="KW-0732">Signal</keyword>
<dbReference type="EMBL" id="M38297">
    <property type="protein sequence ID" value="AAA60140.1"/>
    <property type="molecule type" value="mRNA"/>
</dbReference>
<dbReference type="EMBL" id="J00292">
    <property type="protein sequence ID" value="AAB59621.1"/>
    <property type="molecule type" value="Genomic_DNA"/>
</dbReference>
<dbReference type="EMBL" id="J00291">
    <property type="protein sequence ID" value="AAB59621.1"/>
    <property type="status" value="JOINED"/>
    <property type="molecule type" value="Genomic_DNA"/>
</dbReference>
<dbReference type="EMBL" id="V01510">
    <property type="protein sequence ID" value="CAA24754.1"/>
    <property type="molecule type" value="Genomic_DNA"/>
</dbReference>
<dbReference type="EMBL" id="AC012457">
    <property type="protein sequence ID" value="AAY24354.1"/>
    <property type="molecule type" value="Genomic_DNA"/>
</dbReference>
<dbReference type="EMBL" id="CH471053">
    <property type="protein sequence ID" value="EAX00729.1"/>
    <property type="molecule type" value="Genomic_DNA"/>
</dbReference>
<dbReference type="EMBL" id="CH471053">
    <property type="protein sequence ID" value="EAX00730.1"/>
    <property type="molecule type" value="Genomic_DNA"/>
</dbReference>
<dbReference type="EMBL" id="BC065832">
    <property type="protein sequence ID" value="AAH65832.1"/>
    <property type="molecule type" value="mRNA"/>
</dbReference>
<dbReference type="EMBL" id="M25896">
    <property type="protein sequence ID" value="AAA35799.1"/>
    <property type="molecule type" value="mRNA"/>
</dbReference>
<dbReference type="CCDS" id="CCDS1717.1"/>
<dbReference type="PIR" id="A17229">
    <property type="entry name" value="CTHUP"/>
</dbReference>
<dbReference type="RefSeq" id="NP_000930.1">
    <property type="nucleotide sequence ID" value="NM_000939.4"/>
</dbReference>
<dbReference type="RefSeq" id="NP_001030333.1">
    <property type="nucleotide sequence ID" value="NM_001035256.3"/>
</dbReference>
<dbReference type="RefSeq" id="NP_001306133.1">
    <property type="nucleotide sequence ID" value="NM_001319204.2"/>
</dbReference>
<dbReference type="RefSeq" id="NP_001306134.1">
    <property type="nucleotide sequence ID" value="NM_001319205.2"/>
</dbReference>
<dbReference type="PDB" id="4XNH">
    <property type="method" value="X-ray"/>
    <property type="resolution" value="2.10 A"/>
    <property type="chains" value="F=138-145"/>
</dbReference>
<dbReference type="PDB" id="4XPD">
    <property type="method" value="X-ray"/>
    <property type="resolution" value="2.81 A"/>
    <property type="chains" value="F=138-145"/>
</dbReference>
<dbReference type="PDB" id="4Y49">
    <property type="method" value="X-ray"/>
    <property type="resolution" value="3.95 A"/>
    <property type="chains" value="E/K/Q=138-145"/>
</dbReference>
<dbReference type="PDB" id="6TUB">
    <property type="method" value="NMR"/>
    <property type="chains" value="A/B/C/D/E/F=237-267"/>
</dbReference>
<dbReference type="PDB" id="7F53">
    <property type="method" value="EM"/>
    <property type="resolution" value="3.00 A"/>
    <property type="chains" value="L=138-150"/>
</dbReference>
<dbReference type="PDB" id="7F54">
    <property type="method" value="EM"/>
    <property type="resolution" value="3.00 A"/>
    <property type="chains" value="L=138-150"/>
</dbReference>
<dbReference type="PDB" id="7PIV">
    <property type="method" value="EM"/>
    <property type="resolution" value="2.86 A"/>
    <property type="chains" value="P=138-150"/>
</dbReference>
<dbReference type="PDB" id="8F7Q">
    <property type="method" value="EM"/>
    <property type="resolution" value="3.22 A"/>
    <property type="chains" value="P/Q=237-267"/>
</dbReference>
<dbReference type="PDB" id="8INR">
    <property type="method" value="EM"/>
    <property type="resolution" value="2.73 A"/>
    <property type="chains" value="L=138-150"/>
</dbReference>
<dbReference type="PDB" id="8IOC">
    <property type="method" value="EM"/>
    <property type="resolution" value="2.86 A"/>
    <property type="chains" value="L=77-87"/>
</dbReference>
<dbReference type="PDBsum" id="4XNH"/>
<dbReference type="PDBsum" id="4XPD"/>
<dbReference type="PDBsum" id="4Y49"/>
<dbReference type="PDBsum" id="6TUB"/>
<dbReference type="PDBsum" id="7F53"/>
<dbReference type="PDBsum" id="7F54"/>
<dbReference type="PDBsum" id="7PIV"/>
<dbReference type="PDBsum" id="8F7Q"/>
<dbReference type="PDBsum" id="8INR"/>
<dbReference type="PDBsum" id="8IOC"/>
<dbReference type="BMRB" id="P01189"/>
<dbReference type="EMDB" id="EMD-28907"/>
<dbReference type="EMDB" id="EMD-31456"/>
<dbReference type="EMDB" id="EMD-35601"/>
<dbReference type="EMDB" id="EMD-35615"/>
<dbReference type="SMR" id="P01189"/>
<dbReference type="BioGRID" id="111439">
    <property type="interactions" value="50"/>
</dbReference>
<dbReference type="FunCoup" id="P01189">
    <property type="interactions" value="839"/>
</dbReference>
<dbReference type="IntAct" id="P01189">
    <property type="interactions" value="24"/>
</dbReference>
<dbReference type="STRING" id="9606.ENSP00000384092"/>
<dbReference type="DrugBank" id="DB01565">
    <property type="generic name" value="Dihydromorphine"/>
</dbReference>
<dbReference type="DrugBank" id="DB01497">
    <property type="generic name" value="Etorphine"/>
</dbReference>
<dbReference type="DrugBank" id="DB00836">
    <property type="generic name" value="Loperamide"/>
</dbReference>
<dbReference type="GlyCosmos" id="P01189">
    <property type="glycosylation" value="2 sites, No reported glycans"/>
</dbReference>
<dbReference type="GlyGen" id="P01189">
    <property type="glycosylation" value="2 sites"/>
</dbReference>
<dbReference type="iPTMnet" id="P01189"/>
<dbReference type="PhosphoSitePlus" id="P01189"/>
<dbReference type="BioMuta" id="POMC"/>
<dbReference type="DMDM" id="116880"/>
<dbReference type="jPOST" id="P01189"/>
<dbReference type="MassIVE" id="P01189"/>
<dbReference type="PaxDb" id="9606-ENSP00000384092"/>
<dbReference type="PeptideAtlas" id="P01189"/>
<dbReference type="ProteomicsDB" id="51343"/>
<dbReference type="Antibodypedia" id="3452">
    <property type="antibodies" value="2427 antibodies from 42 providers"/>
</dbReference>
<dbReference type="DNASU" id="5443"/>
<dbReference type="Ensembl" id="ENST00000264708.7">
    <property type="protein sequence ID" value="ENSP00000264708.3"/>
    <property type="gene ID" value="ENSG00000115138.11"/>
</dbReference>
<dbReference type="Ensembl" id="ENST00000380794.5">
    <property type="protein sequence ID" value="ENSP00000370171.1"/>
    <property type="gene ID" value="ENSG00000115138.11"/>
</dbReference>
<dbReference type="Ensembl" id="ENST00000395826.7">
    <property type="protein sequence ID" value="ENSP00000379170.2"/>
    <property type="gene ID" value="ENSG00000115138.11"/>
</dbReference>
<dbReference type="Ensembl" id="ENST00000405623.5">
    <property type="protein sequence ID" value="ENSP00000384092.1"/>
    <property type="gene ID" value="ENSG00000115138.11"/>
</dbReference>
<dbReference type="GeneID" id="5443"/>
<dbReference type="KEGG" id="hsa:5443"/>
<dbReference type="MANE-Select" id="ENST00000395826.7">
    <property type="protein sequence ID" value="ENSP00000379170.2"/>
    <property type="RefSeq nucleotide sequence ID" value="NM_000939.4"/>
    <property type="RefSeq protein sequence ID" value="NP_000930.1"/>
</dbReference>
<dbReference type="UCSC" id="uc002rfy.1">
    <property type="organism name" value="human"/>
</dbReference>
<dbReference type="AGR" id="HGNC:9201"/>
<dbReference type="CTD" id="5443"/>
<dbReference type="DisGeNET" id="5443"/>
<dbReference type="GeneCards" id="POMC"/>
<dbReference type="HGNC" id="HGNC:9201">
    <property type="gene designation" value="POMC"/>
</dbReference>
<dbReference type="HPA" id="ENSG00000115138">
    <property type="expression patterns" value="Tissue enriched (pituitary)"/>
</dbReference>
<dbReference type="MalaCards" id="POMC"/>
<dbReference type="MIM" id="176830">
    <property type="type" value="gene"/>
</dbReference>
<dbReference type="MIM" id="601665">
    <property type="type" value="phenotype"/>
</dbReference>
<dbReference type="MIM" id="609734">
    <property type="type" value="phenotype"/>
</dbReference>
<dbReference type="neXtProt" id="NX_P01189"/>
<dbReference type="OpenTargets" id="ENSG00000115138"/>
<dbReference type="Orphanet" id="71526">
    <property type="disease" value="Obesity due to pro-opiomelanocortin deficiency"/>
</dbReference>
<dbReference type="PharmGKB" id="PA33526"/>
<dbReference type="VEuPathDB" id="HostDB:ENSG00000115138"/>
<dbReference type="eggNOG" id="ENOG502RZNY">
    <property type="taxonomic scope" value="Eukaryota"/>
</dbReference>
<dbReference type="GeneTree" id="ENSGT00390000016811"/>
<dbReference type="HOGENOM" id="CLU_094632_0_0_1"/>
<dbReference type="InParanoid" id="P01189"/>
<dbReference type="OMA" id="NIRKYVM"/>
<dbReference type="OrthoDB" id="8962839at2759"/>
<dbReference type="PAN-GO" id="P01189">
    <property type="GO annotations" value="4 GO annotations based on evolutionary models"/>
</dbReference>
<dbReference type="PhylomeDB" id="P01189"/>
<dbReference type="TreeFam" id="TF333215"/>
<dbReference type="PathwayCommons" id="P01189"/>
<dbReference type="Reactome" id="R-HSA-111885">
    <property type="pathway name" value="Opioid Signalling"/>
</dbReference>
<dbReference type="Reactome" id="R-HSA-193048">
    <property type="pathway name" value="Androgen biosynthesis"/>
</dbReference>
<dbReference type="Reactome" id="R-HSA-194002">
    <property type="pathway name" value="Glucocorticoid biosynthesis"/>
</dbReference>
<dbReference type="Reactome" id="R-HSA-202040">
    <property type="pathway name" value="G-protein activation"/>
</dbReference>
<dbReference type="Reactome" id="R-HSA-209952">
    <property type="pathway name" value="Peptide hormone biosynthesis"/>
</dbReference>
<dbReference type="Reactome" id="R-HSA-211976">
    <property type="pathway name" value="Endogenous sterols"/>
</dbReference>
<dbReference type="Reactome" id="R-HSA-375276">
    <property type="pathway name" value="Peptide ligand-binding receptors"/>
</dbReference>
<dbReference type="Reactome" id="R-HSA-418555">
    <property type="pathway name" value="G alpha (s) signalling events"/>
</dbReference>
<dbReference type="Reactome" id="R-HSA-418594">
    <property type="pathway name" value="G alpha (i) signalling events"/>
</dbReference>
<dbReference type="Reactome" id="R-HSA-5579031">
    <property type="pathway name" value="Defective ACTH causes obesity and POMCD"/>
</dbReference>
<dbReference type="Reactome" id="R-HSA-6785807">
    <property type="pathway name" value="Interleukin-4 and Interleukin-13 signaling"/>
</dbReference>
<dbReference type="Reactome" id="R-HSA-9615017">
    <property type="pathway name" value="FOXO-mediated transcription of oxidative stress, metabolic and neuronal genes"/>
</dbReference>
<dbReference type="Reactome" id="R-HSA-9856649">
    <property type="pathway name" value="Transcriptional and post-translational regulation of MITF-M expression and activity"/>
</dbReference>
<dbReference type="SignaLink" id="P01189"/>
<dbReference type="SIGNOR" id="P01189"/>
<dbReference type="BioGRID-ORCS" id="5443">
    <property type="hits" value="14 hits in 1155 CRISPR screens"/>
</dbReference>
<dbReference type="ChiTaRS" id="POMC">
    <property type="organism name" value="human"/>
</dbReference>
<dbReference type="GeneWiki" id="Proopiomelanocortin"/>
<dbReference type="GenomeRNAi" id="5443"/>
<dbReference type="Pharos" id="P01189">
    <property type="development level" value="Tbio"/>
</dbReference>
<dbReference type="PRO" id="PR:P01189"/>
<dbReference type="Proteomes" id="UP000005640">
    <property type="component" value="Chromosome 2"/>
</dbReference>
<dbReference type="RNAct" id="P01189">
    <property type="molecule type" value="protein"/>
</dbReference>
<dbReference type="Bgee" id="ENSG00000115138">
    <property type="expression patterns" value="Expressed in adenohypophysis and 93 other cell types or tissues"/>
</dbReference>
<dbReference type="ExpressionAtlas" id="P01189">
    <property type="expression patterns" value="baseline and differential"/>
</dbReference>
<dbReference type="GO" id="GO:0005737">
    <property type="term" value="C:cytoplasm"/>
    <property type="evidence" value="ECO:0000250"/>
    <property type="project" value="UniProtKB"/>
</dbReference>
<dbReference type="GO" id="GO:0005576">
    <property type="term" value="C:extracellular region"/>
    <property type="evidence" value="ECO:0000304"/>
    <property type="project" value="Reactome"/>
</dbReference>
<dbReference type="GO" id="GO:0005615">
    <property type="term" value="C:extracellular space"/>
    <property type="evidence" value="ECO:0000314"/>
    <property type="project" value="UniProtKB"/>
</dbReference>
<dbReference type="GO" id="GO:0030141">
    <property type="term" value="C:secretory granule"/>
    <property type="evidence" value="ECO:0000250"/>
    <property type="project" value="UniProtKB"/>
</dbReference>
<dbReference type="GO" id="GO:0034774">
    <property type="term" value="C:secretory granule lumen"/>
    <property type="evidence" value="ECO:0000304"/>
    <property type="project" value="Reactome"/>
</dbReference>
<dbReference type="GO" id="GO:0001664">
    <property type="term" value="F:G protein-coupled receptor binding"/>
    <property type="evidence" value="ECO:0000314"/>
    <property type="project" value="BHF-UCL"/>
</dbReference>
<dbReference type="GO" id="GO:0005179">
    <property type="term" value="F:hormone activity"/>
    <property type="evidence" value="ECO:0000315"/>
    <property type="project" value="UniProtKB"/>
</dbReference>
<dbReference type="GO" id="GO:0005102">
    <property type="term" value="F:signaling receptor binding"/>
    <property type="evidence" value="ECO:0000315"/>
    <property type="project" value="UniProtKB"/>
</dbReference>
<dbReference type="GO" id="GO:0070996">
    <property type="term" value="F:type 1 melanocortin receptor binding"/>
    <property type="evidence" value="ECO:0000314"/>
    <property type="project" value="BHF-UCL"/>
</dbReference>
<dbReference type="GO" id="GO:0031781">
    <property type="term" value="F:type 3 melanocortin receptor binding"/>
    <property type="evidence" value="ECO:0000353"/>
    <property type="project" value="BHF-UCL"/>
</dbReference>
<dbReference type="GO" id="GO:0031782">
    <property type="term" value="F:type 4 melanocortin receptor binding"/>
    <property type="evidence" value="ECO:0000353"/>
    <property type="project" value="BHF-UCL"/>
</dbReference>
<dbReference type="GO" id="GO:0019722">
    <property type="term" value="P:calcium-mediated signaling"/>
    <property type="evidence" value="ECO:0000250"/>
    <property type="project" value="ARUK-UCL"/>
</dbReference>
<dbReference type="GO" id="GO:0007267">
    <property type="term" value="P:cell-cell signaling"/>
    <property type="evidence" value="ECO:0000315"/>
    <property type="project" value="UniProtKB"/>
</dbReference>
<dbReference type="GO" id="GO:0033059">
    <property type="term" value="P:cellular pigmentation"/>
    <property type="evidence" value="ECO:0000315"/>
    <property type="project" value="UniProtKB"/>
</dbReference>
<dbReference type="GO" id="GO:0006091">
    <property type="term" value="P:generation of precursor metabolites and energy"/>
    <property type="evidence" value="ECO:0000315"/>
    <property type="project" value="UniProtKB"/>
</dbReference>
<dbReference type="GO" id="GO:0042593">
    <property type="term" value="P:glucose homeostasis"/>
    <property type="evidence" value="ECO:0007669"/>
    <property type="project" value="Ensembl"/>
</dbReference>
<dbReference type="GO" id="GO:0032720">
    <property type="term" value="P:negative regulation of tumor necrosis factor production"/>
    <property type="evidence" value="ECO:0000314"/>
    <property type="project" value="BHF-UCL"/>
</dbReference>
<dbReference type="GO" id="GO:0007218">
    <property type="term" value="P:neuropeptide signaling pathway"/>
    <property type="evidence" value="ECO:0007669"/>
    <property type="project" value="UniProtKB-KW"/>
</dbReference>
<dbReference type="GO" id="GO:0106071">
    <property type="term" value="P:positive regulation of adenylate cyclase-activating G protein-coupled receptor signaling pathway"/>
    <property type="evidence" value="ECO:0000250"/>
    <property type="project" value="ARUK-UCL"/>
</dbReference>
<dbReference type="GO" id="GO:0140668">
    <property type="term" value="P:positive regulation of oxytocin production"/>
    <property type="evidence" value="ECO:0007669"/>
    <property type="project" value="Ensembl"/>
</dbReference>
<dbReference type="GO" id="GO:0045944">
    <property type="term" value="P:positive regulation of transcription by RNA polymerase II"/>
    <property type="evidence" value="ECO:0000314"/>
    <property type="project" value="BHF-UCL"/>
</dbReference>
<dbReference type="GO" id="GO:0032098">
    <property type="term" value="P:regulation of appetite"/>
    <property type="evidence" value="ECO:0000315"/>
    <property type="project" value="UniProtKB"/>
</dbReference>
<dbReference type="GO" id="GO:0008217">
    <property type="term" value="P:regulation of blood pressure"/>
    <property type="evidence" value="ECO:0000250"/>
    <property type="project" value="UniProtKB"/>
</dbReference>
<dbReference type="GO" id="GO:2000852">
    <property type="term" value="P:regulation of corticosterone secretion"/>
    <property type="evidence" value="ECO:0000318"/>
    <property type="project" value="GO_Central"/>
</dbReference>
<dbReference type="GO" id="GO:0070873">
    <property type="term" value="P:regulation of glycogen metabolic process"/>
    <property type="evidence" value="ECO:0007669"/>
    <property type="project" value="Ensembl"/>
</dbReference>
<dbReference type="GO" id="GO:1990680">
    <property type="term" value="P:response to melanocyte-stimulating hormone"/>
    <property type="evidence" value="ECO:0000250"/>
    <property type="project" value="ARUK-UCL"/>
</dbReference>
<dbReference type="GO" id="GO:0007165">
    <property type="term" value="P:signal transduction"/>
    <property type="evidence" value="ECO:0000315"/>
    <property type="project" value="UniProtKB"/>
</dbReference>
<dbReference type="InterPro" id="IPR013531">
    <property type="entry name" value="Mcrtin_ACTH_cent"/>
</dbReference>
<dbReference type="InterPro" id="IPR013593">
    <property type="entry name" value="Melanocortin_N"/>
</dbReference>
<dbReference type="InterPro" id="IPR013532">
    <property type="entry name" value="Opioid_neuropept"/>
</dbReference>
<dbReference type="InterPro" id="IPR001941">
    <property type="entry name" value="PMOC"/>
</dbReference>
<dbReference type="InterPro" id="IPR050878">
    <property type="entry name" value="POMC-derived_peptides"/>
</dbReference>
<dbReference type="PANTHER" id="PTHR11416">
    <property type="entry name" value="PRO-OPIOMELANOCORTIN"/>
    <property type="match status" value="1"/>
</dbReference>
<dbReference type="PANTHER" id="PTHR11416:SF7">
    <property type="entry name" value="PRO-OPIOMELANOCORTIN"/>
    <property type="match status" value="1"/>
</dbReference>
<dbReference type="Pfam" id="PF00976">
    <property type="entry name" value="ACTH_domain"/>
    <property type="match status" value="3"/>
</dbReference>
<dbReference type="Pfam" id="PF08384">
    <property type="entry name" value="NPP"/>
    <property type="match status" value="1"/>
</dbReference>
<dbReference type="Pfam" id="PF08035">
    <property type="entry name" value="Op_neuropeptide"/>
    <property type="match status" value="1"/>
</dbReference>
<dbReference type="PRINTS" id="PR00383">
    <property type="entry name" value="MELANOCORTIN"/>
</dbReference>
<dbReference type="SMART" id="SM01363">
    <property type="entry name" value="ACTH_domain"/>
    <property type="match status" value="2"/>
</dbReference>
<dbReference type="SMART" id="SM01364">
    <property type="entry name" value="NPP"/>
    <property type="match status" value="1"/>
</dbReference>
<dbReference type="SMART" id="SM01365">
    <property type="entry name" value="Op_neuropeptide"/>
    <property type="match status" value="1"/>
</dbReference>
<feature type="signal peptide" evidence="8 10 12">
    <location>
        <begin position="1"/>
        <end position="26"/>
    </location>
</feature>
<feature type="peptide" id="PRO_0000024966" description="NPP">
    <location>
        <begin position="27"/>
        <end position="102"/>
    </location>
</feature>
<feature type="peptide" id="PRO_0000024967" description="Melanotropin gamma" evidence="9">
    <location>
        <begin position="77"/>
        <end position="87"/>
    </location>
</feature>
<feature type="peptide" id="PRO_0000024968" description="Potential peptide">
    <location>
        <begin position="105"/>
        <end position="134"/>
    </location>
</feature>
<feature type="peptide" id="PRO_0000024969" description="Corticotropin">
    <location>
        <begin position="138"/>
        <end position="176"/>
    </location>
</feature>
<feature type="peptide" id="PRO_0000024970" description="Melanocyte-stimulating hormone alpha">
    <location>
        <begin position="138"/>
        <end position="150"/>
    </location>
</feature>
<feature type="peptide" id="PRO_0000024971" description="Corticotropin-like intermediary peptide">
    <location>
        <begin position="156"/>
        <end position="176"/>
    </location>
</feature>
<feature type="peptide" id="PRO_0000024972" description="Lipotropin beta">
    <location>
        <begin position="179"/>
        <end position="267"/>
    </location>
</feature>
<feature type="peptide" id="PRO_0000024973" description="Lipotropin gamma">
    <location>
        <begin position="179"/>
        <end position="234"/>
    </location>
</feature>
<feature type="peptide" id="PRO_0000024974" description="Melanocyte-stimulating hormone beta">
    <location>
        <begin position="217"/>
        <end position="234"/>
    </location>
</feature>
<feature type="peptide" id="PRO_0000024975" description="Beta-endorphin">
    <location>
        <begin position="237"/>
        <end position="267"/>
    </location>
</feature>
<feature type="peptide" id="PRO_0000024976" description="Met-enkephalin">
    <location>
        <begin position="237"/>
        <end position="241"/>
    </location>
</feature>
<feature type="region of interest" description="Disordered" evidence="4">
    <location>
        <begin position="88"/>
        <end position="175"/>
    </location>
</feature>
<feature type="region of interest" description="Disordered" evidence="4">
    <location>
        <begin position="181"/>
        <end position="200"/>
    </location>
</feature>
<feature type="region of interest" description="Disordered" evidence="4">
    <location>
        <begin position="222"/>
        <end position="241"/>
    </location>
</feature>
<feature type="compositionally biased region" description="Basic and acidic residues" evidence="4">
    <location>
        <begin position="121"/>
        <end position="145"/>
    </location>
</feature>
<feature type="compositionally biased region" description="Basic and acidic residues" evidence="4">
    <location>
        <begin position="222"/>
        <end position="237"/>
    </location>
</feature>
<feature type="modified residue" description="Phenylalanine amide" evidence="1">
    <location>
        <position position="87"/>
    </location>
</feature>
<feature type="modified residue" description="Glutamic acid 1-amide" evidence="11">
    <location>
        <position position="134"/>
    </location>
</feature>
<feature type="modified residue" description="N-acetylserine; in Corticotropin" evidence="2">
    <location>
        <position position="138"/>
    </location>
</feature>
<feature type="modified residue" description="Valine amide" evidence="1">
    <location>
        <position position="150"/>
    </location>
</feature>
<feature type="modified residue" description="Phosphoserine" evidence="17">
    <location>
        <position position="168"/>
    </location>
</feature>
<feature type="glycosylation site" description="O-linked (HexNAc...) threonine" evidence="10">
    <location>
        <position position="71"/>
    </location>
</feature>
<feature type="glycosylation site" description="N-linked (GlcNAc...) asparagine">
    <location>
        <position position="91"/>
    </location>
</feature>
<feature type="disulfide bond" evidence="1">
    <location>
        <begin position="28"/>
        <end position="50"/>
    </location>
</feature>
<feature type="sequence variant" id="VAR_010699" evidence="6">
    <original>S</original>
    <variation>T</variation>
    <location>
        <position position="7"/>
    </location>
</feature>
<feature type="sequence variant" id="VAR_010700" description="In dbSNP:rs139750421." evidence="6">
    <original>S</original>
    <variation>L</variation>
    <location>
        <position position="9"/>
    </location>
</feature>
<feature type="sequence variant" id="VAR_029762" description="In dbSNP:rs28932471.">
    <original>P</original>
    <variation>L</variation>
    <location>
        <position position="62"/>
    </location>
</feature>
<feature type="sequence variant" id="VAR_010714" evidence="6 13 15">
    <location>
        <begin position="97"/>
        <end position="99"/>
    </location>
</feature>
<feature type="sequence variant" id="VAR_010715" description="In dbSNP:rs750136455." evidence="15">
    <original>D</original>
    <variation>N</variation>
    <location>
        <position position="106"/>
    </location>
</feature>
<feature type="sequence variant" id="VAR_029314" description="In dbSNP:rs8192606.">
    <original>P</original>
    <variation>A</variation>
    <location>
        <position position="132"/>
    </location>
</feature>
<feature type="sequence variant" id="VAR_010716" description="In dbSNP:rs80326661." evidence="15">
    <original>E</original>
    <variation>G</variation>
    <location>
        <position position="214"/>
    </location>
</feature>
<feature type="sequence variant" id="VAR_010701" description="May confer susceptibility to obesity; reduces the ability to activate melanocortin receptor 4; dbSNP:rs28932472." evidence="6 7">
    <original>R</original>
    <variation>G</variation>
    <location>
        <position position="236"/>
    </location>
</feature>
<feature type="sequence variant" id="VAR_012201" evidence="5">
    <original>R</original>
    <variation>Q</variation>
    <location>
        <position position="236"/>
    </location>
</feature>
<feature type="sequence conflict" description="In Ref. 8." evidence="16" ref="8">
    <original>R</original>
    <variation>G</variation>
    <location>
        <position position="48"/>
    </location>
</feature>
<feature type="sequence conflict" description="In Ref. 2." evidence="16" ref="2">
    <original>P</original>
    <variation>T</variation>
    <location>
        <position position="115"/>
    </location>
</feature>
<feature type="strand" evidence="21">
    <location>
        <begin position="81"/>
        <end position="83"/>
    </location>
</feature>
<feature type="strand" evidence="20">
    <location>
        <begin position="143"/>
        <end position="146"/>
    </location>
</feature>
<feature type="strand" evidence="18">
    <location>
        <begin position="239"/>
        <end position="245"/>
    </location>
</feature>
<feature type="helix" evidence="19">
    <location>
        <begin position="249"/>
        <end position="256"/>
    </location>
</feature>
<feature type="strand" evidence="18">
    <location>
        <begin position="258"/>
        <end position="263"/>
    </location>
</feature>
<protein>
    <recommendedName>
        <fullName>Pro-opiomelanocortin</fullName>
        <shortName>POMC</shortName>
    </recommendedName>
    <alternativeName>
        <fullName>Corticotropin-lipotropin</fullName>
    </alternativeName>
    <component>
        <recommendedName>
            <fullName>NPP</fullName>
        </recommendedName>
    </component>
    <component>
        <recommendedName>
            <fullName>Melanotropin gamma</fullName>
        </recommendedName>
        <alternativeName>
            <fullName>Gamma-MSH</fullName>
        </alternativeName>
    </component>
    <component>
        <recommendedName>
            <fullName>Potential peptide</fullName>
        </recommendedName>
    </component>
    <component>
        <recommendedName>
            <fullName>Corticotropin</fullName>
        </recommendedName>
        <alternativeName>
            <fullName>Adrenocorticotropic hormone</fullName>
            <shortName>ACTH</shortName>
        </alternativeName>
    </component>
    <component>
        <recommendedName>
            <fullName>Melanocyte-stimulating hormone alpha</fullName>
            <shortName>Alpha-MSH</shortName>
        </recommendedName>
        <alternativeName>
            <fullName>Melanotropin alpha</fullName>
        </alternativeName>
    </component>
    <component>
        <recommendedName>
            <fullName>Corticotropin-like intermediary peptide</fullName>
            <shortName>CLIP</shortName>
        </recommendedName>
    </component>
    <component>
        <recommendedName>
            <fullName>Lipotropin beta</fullName>
        </recommendedName>
        <alternativeName>
            <fullName>Beta-LPH</fullName>
        </alternativeName>
    </component>
    <component>
        <recommendedName>
            <fullName>Lipotropin gamma</fullName>
        </recommendedName>
        <alternativeName>
            <fullName>Gamma-LPH</fullName>
        </alternativeName>
    </component>
    <component>
        <recommendedName>
            <fullName>Melanocyte-stimulating hormone beta</fullName>
            <shortName>Beta-MSH</shortName>
        </recommendedName>
        <alternativeName>
            <fullName>Melanotropin beta</fullName>
        </alternativeName>
    </component>
    <component>
        <recommendedName>
            <fullName>Beta-endorphin</fullName>
        </recommendedName>
    </component>
    <component>
        <recommendedName>
            <fullName>Met-enkephalin</fullName>
        </recommendedName>
    </component>
</protein>
<gene>
    <name type="primary">POMC</name>
</gene>
<evidence type="ECO:0000250" key="1"/>
<evidence type="ECO:0000250" key="2">
    <source>
        <dbReference type="UniProtKB" id="P01191"/>
    </source>
</evidence>
<evidence type="ECO:0000250" key="3">
    <source>
        <dbReference type="UniProtKB" id="P01193"/>
    </source>
</evidence>
<evidence type="ECO:0000256" key="4">
    <source>
        <dbReference type="SAM" id="MobiDB-lite"/>
    </source>
</evidence>
<evidence type="ECO:0000269" key="5">
    <source>
    </source>
</evidence>
<evidence type="ECO:0000269" key="6">
    <source>
    </source>
</evidence>
<evidence type="ECO:0000269" key="7">
    <source>
    </source>
</evidence>
<evidence type="ECO:0000269" key="8">
    <source>
    </source>
</evidence>
<evidence type="ECO:0000269" key="9">
    <source>
    </source>
</evidence>
<evidence type="ECO:0000269" key="10">
    <source>
    </source>
</evidence>
<evidence type="ECO:0000269" key="11">
    <source>
    </source>
</evidence>
<evidence type="ECO:0000269" key="12">
    <source>
    </source>
</evidence>
<evidence type="ECO:0000269" key="13">
    <source>
    </source>
</evidence>
<evidence type="ECO:0000269" key="14">
    <source>
    </source>
</evidence>
<evidence type="ECO:0000269" key="15">
    <source>
    </source>
</evidence>
<evidence type="ECO:0000305" key="16"/>
<evidence type="ECO:0007744" key="17">
    <source>
    </source>
</evidence>
<evidence type="ECO:0007829" key="18">
    <source>
        <dbReference type="PDB" id="6TUB"/>
    </source>
</evidence>
<evidence type="ECO:0007829" key="19">
    <source>
        <dbReference type="PDB" id="8F7Q"/>
    </source>
</evidence>
<evidence type="ECO:0007829" key="20">
    <source>
        <dbReference type="PDB" id="8INR"/>
    </source>
</evidence>
<evidence type="ECO:0007829" key="21">
    <source>
        <dbReference type="PDB" id="8IOC"/>
    </source>
</evidence>
<reference key="1">
    <citation type="journal article" date="1981" name="FEBS Lett.">
        <title>Isolation and structural organization of the human corticotropin-beta-lipotropin precursor gene.</title>
        <authorList>
            <person name="Takahashi H."/>
            <person name="Teranishi Y."/>
            <person name="Nakanishi S."/>
            <person name="Numa S."/>
        </authorList>
    </citation>
    <scope>NUCLEOTIDE SEQUENCE [GENOMIC DNA]</scope>
</reference>
<reference key="2">
    <citation type="journal article" date="1982" name="DNA">
        <title>The human pro-opiomelanocortin gene: organization, sequence, and interspersion with repetitive DNA.</title>
        <authorList>
            <person name="Whitfeld P.L."/>
            <person name="Seeburg P.H."/>
            <person name="Shine J."/>
        </authorList>
    </citation>
    <scope>NUCLEOTIDE SEQUENCE [GENOMIC DNA]</scope>
</reference>
<reference key="3">
    <citation type="journal article" date="1983" name="Nucleic Acids Res.">
        <title>Complete nucleotide sequence of the human corticotropin-beta-lipotropin precursor gene.</title>
        <authorList>
            <person name="Takahashi H."/>
            <person name="Hakamata Y."/>
            <person name="Watanabe Y."/>
            <person name="Kikuno R."/>
            <person name="Miyata T."/>
            <person name="Numa S."/>
        </authorList>
    </citation>
    <scope>NUCLEOTIDE SEQUENCE [GENOMIC DNA]</scope>
</reference>
<reference key="4">
    <citation type="journal article" date="2005" name="Nature">
        <title>Generation and annotation of the DNA sequences of human chromosomes 2 and 4.</title>
        <authorList>
            <person name="Hillier L.W."/>
            <person name="Graves T.A."/>
            <person name="Fulton R.S."/>
            <person name="Fulton L.A."/>
            <person name="Pepin K.H."/>
            <person name="Minx P."/>
            <person name="Wagner-McPherson C."/>
            <person name="Layman D."/>
            <person name="Wylie K."/>
            <person name="Sekhon M."/>
            <person name="Becker M.C."/>
            <person name="Fewell G.A."/>
            <person name="Delehaunty K.D."/>
            <person name="Miner T.L."/>
            <person name="Nash W.E."/>
            <person name="Kremitzki C."/>
            <person name="Oddy L."/>
            <person name="Du H."/>
            <person name="Sun H."/>
            <person name="Bradshaw-Cordum H."/>
            <person name="Ali J."/>
            <person name="Carter J."/>
            <person name="Cordes M."/>
            <person name="Harris A."/>
            <person name="Isak A."/>
            <person name="van Brunt A."/>
            <person name="Nguyen C."/>
            <person name="Du F."/>
            <person name="Courtney L."/>
            <person name="Kalicki J."/>
            <person name="Ozersky P."/>
            <person name="Abbott S."/>
            <person name="Armstrong J."/>
            <person name="Belter E.A."/>
            <person name="Caruso L."/>
            <person name="Cedroni M."/>
            <person name="Cotton M."/>
            <person name="Davidson T."/>
            <person name="Desai A."/>
            <person name="Elliott G."/>
            <person name="Erb T."/>
            <person name="Fronick C."/>
            <person name="Gaige T."/>
            <person name="Haakenson W."/>
            <person name="Haglund K."/>
            <person name="Holmes A."/>
            <person name="Harkins R."/>
            <person name="Kim K."/>
            <person name="Kruchowski S.S."/>
            <person name="Strong C.M."/>
            <person name="Grewal N."/>
            <person name="Goyea E."/>
            <person name="Hou S."/>
            <person name="Levy A."/>
            <person name="Martinka S."/>
            <person name="Mead K."/>
            <person name="McLellan M.D."/>
            <person name="Meyer R."/>
            <person name="Randall-Maher J."/>
            <person name="Tomlinson C."/>
            <person name="Dauphin-Kohlberg S."/>
            <person name="Kozlowicz-Reilly A."/>
            <person name="Shah N."/>
            <person name="Swearengen-Shahid S."/>
            <person name="Snider J."/>
            <person name="Strong J.T."/>
            <person name="Thompson J."/>
            <person name="Yoakum M."/>
            <person name="Leonard S."/>
            <person name="Pearman C."/>
            <person name="Trani L."/>
            <person name="Radionenko M."/>
            <person name="Waligorski J.E."/>
            <person name="Wang C."/>
            <person name="Rock S.M."/>
            <person name="Tin-Wollam A.-M."/>
            <person name="Maupin R."/>
            <person name="Latreille P."/>
            <person name="Wendl M.C."/>
            <person name="Yang S.-P."/>
            <person name="Pohl C."/>
            <person name="Wallis J.W."/>
            <person name="Spieth J."/>
            <person name="Bieri T.A."/>
            <person name="Berkowicz N."/>
            <person name="Nelson J.O."/>
            <person name="Osborne J."/>
            <person name="Ding L."/>
            <person name="Meyer R."/>
            <person name="Sabo A."/>
            <person name="Shotland Y."/>
            <person name="Sinha P."/>
            <person name="Wohldmann P.E."/>
            <person name="Cook L.L."/>
            <person name="Hickenbotham M.T."/>
            <person name="Eldred J."/>
            <person name="Williams D."/>
            <person name="Jones T.A."/>
            <person name="She X."/>
            <person name="Ciccarelli F.D."/>
            <person name="Izaurralde E."/>
            <person name="Taylor J."/>
            <person name="Schmutz J."/>
            <person name="Myers R.M."/>
            <person name="Cox D.R."/>
            <person name="Huang X."/>
            <person name="McPherson J.D."/>
            <person name="Mardis E.R."/>
            <person name="Clifton S.W."/>
            <person name="Warren W.C."/>
            <person name="Chinwalla A.T."/>
            <person name="Eddy S.R."/>
            <person name="Marra M.A."/>
            <person name="Ovcharenko I."/>
            <person name="Furey T.S."/>
            <person name="Miller W."/>
            <person name="Eichler E.E."/>
            <person name="Bork P."/>
            <person name="Suyama M."/>
            <person name="Torrents D."/>
            <person name="Waterston R.H."/>
            <person name="Wilson R.K."/>
        </authorList>
    </citation>
    <scope>NUCLEOTIDE SEQUENCE [LARGE SCALE GENOMIC DNA]</scope>
</reference>
<reference key="5">
    <citation type="submission" date="2005-09" db="EMBL/GenBank/DDBJ databases">
        <authorList>
            <person name="Mural R.J."/>
            <person name="Istrail S."/>
            <person name="Sutton G."/>
            <person name="Florea L."/>
            <person name="Halpern A.L."/>
            <person name="Mobarry C.M."/>
            <person name="Lippert R."/>
            <person name="Walenz B."/>
            <person name="Shatkay H."/>
            <person name="Dew I."/>
            <person name="Miller J.R."/>
            <person name="Flanigan M.J."/>
            <person name="Edwards N.J."/>
            <person name="Bolanos R."/>
            <person name="Fasulo D."/>
            <person name="Halldorsson B.V."/>
            <person name="Hannenhalli S."/>
            <person name="Turner R."/>
            <person name="Yooseph S."/>
            <person name="Lu F."/>
            <person name="Nusskern D.R."/>
            <person name="Shue B.C."/>
            <person name="Zheng X.H."/>
            <person name="Zhong F."/>
            <person name="Delcher A.L."/>
            <person name="Huson D.H."/>
            <person name="Kravitz S.A."/>
            <person name="Mouchard L."/>
            <person name="Reinert K."/>
            <person name="Remington K.A."/>
            <person name="Clark A.G."/>
            <person name="Waterman M.S."/>
            <person name="Eichler E.E."/>
            <person name="Adams M.D."/>
            <person name="Hunkapiller M.W."/>
            <person name="Myers E.W."/>
            <person name="Venter J.C."/>
        </authorList>
    </citation>
    <scope>NUCLEOTIDE SEQUENCE [LARGE SCALE GENOMIC DNA]</scope>
</reference>
<reference key="6">
    <citation type="journal article" date="2004" name="Genome Res.">
        <title>The status, quality, and expansion of the NIH full-length cDNA project: the Mammalian Gene Collection (MGC).</title>
        <authorList>
            <consortium name="The MGC Project Team"/>
        </authorList>
    </citation>
    <scope>NUCLEOTIDE SEQUENCE [LARGE SCALE MRNA]</scope>
    <source>
        <tissue>Pituitary</tissue>
    </source>
</reference>
<reference key="7">
    <citation type="journal article" date="1987" name="Bioorg. Khim.">
        <title>Synthesis, cloning and primary structure of DNA complementary to mRNA for human pituitary pro-opiomelanocortin.</title>
        <authorList>
            <person name="Golovin S.Y."/>
            <person name="Karginov V.A."/>
            <person name="Bondar A.A."/>
            <person name="Beklemishev A.B."/>
            <person name="Chekhranova M.K."/>
            <person name="Mertvetsov N.P."/>
            <person name="Pankov Y.A."/>
        </authorList>
    </citation>
    <scope>NUCLEOTIDE SEQUENCE [MRNA] OF 6-267</scope>
</reference>
<reference key="8">
    <citation type="journal article" date="1980" name="Proc. Natl. Acad. Sci. U.S.A.">
        <title>Structural organization of human genomic DNA encoding the pro-opiomelanocortin peptide.</title>
        <authorList>
            <person name="Chang A.C.Y."/>
            <person name="Cochet M."/>
            <person name="Cohen S.N."/>
        </authorList>
    </citation>
    <scope>NUCLEOTIDE SEQUENCE [GENOMIC DNA] OF 46-267</scope>
</reference>
<reference key="9">
    <citation type="journal article" date="1981" name="Proc. Natl. Acad. Sci. U.S.A.">
        <title>Complete amino acid sequence of a human pituitary glycopeptide: an important maturation product of pro-opiomelanocortin.</title>
        <authorList>
            <person name="Seidah N.G."/>
            <person name="Chretien M."/>
        </authorList>
    </citation>
    <scope>PROTEIN SEQUENCE OF 27-102</scope>
</reference>
<reference key="10">
    <citation type="journal article" date="1981" name="J. Biol. Chem.">
        <title>Primary structure of the major human pituitary pro-opiomelanocortin NH2-terminal glycopeptide. Evidence for an aldosterone-stimulating activity.</title>
        <authorList>
            <person name="Seidah N.G."/>
            <person name="Rochemont J."/>
            <person name="Hamelin J."/>
            <person name="Lis M."/>
            <person name="Chretien M."/>
        </authorList>
    </citation>
    <scope>PROTEIN SEQUENCE OF 27-102</scope>
</reference>
<reference key="11">
    <citation type="journal article" date="1981" name="Biochem. Biophys. Res. Commun.">
        <title>The missing fragment of the pro-sequence of human pro-opiomelanocortin: sequence and evidence for C-terminal amidation.</title>
        <authorList>
            <person name="Seidah N.G."/>
            <person name="Rochemont J."/>
            <person name="Hamelin J."/>
            <person name="Benjannet S."/>
            <person name="Chretien M."/>
        </authorList>
    </citation>
    <scope>PROTEIN SEQUENCE OF 105-134</scope>
    <scope>AMIDATION AT GLU-134</scope>
</reference>
<reference key="12">
    <citation type="journal article" date="1973" name="Biochem. J.">
        <title>Confirmation of the 1-20 amino acid sequence of human adrenocorticotrophin.</title>
        <authorList>
            <person name="Bennett H.P.J."/>
            <person name="Lowry P.J."/>
            <person name="McMartin C."/>
        </authorList>
    </citation>
    <scope>PROTEIN SEQUENCE OF 138-176</scope>
</reference>
<reference key="13">
    <citation type="journal article" date="1961" name="J. Biol. Chem.">
        <title>On the structure of human corticotropin (adrenocorticotropic hormone).</title>
        <authorList>
            <person name="Lee T.H."/>
            <person name="Lerner A.B."/>
            <person name="Buettner-Janusch V."/>
        </authorList>
    </citation>
    <scope>PROTEIN SEQUENCE OF 138-176</scope>
</reference>
<reference key="14">
    <citation type="journal article" date="2004" name="Protein Sci.">
        <title>Signal peptide prediction based on analysis of experimentally verified cleavage sites.</title>
        <authorList>
            <person name="Zhang Z."/>
            <person name="Henzel W.J."/>
        </authorList>
    </citation>
    <scope>PROTEIN SEQUENCE OF 27-41</scope>
</reference>
<reference key="15">
    <citation type="journal article" date="1972" name="Nature New Biol.">
        <title>Revised amino-acid sequences for porcine and human adrenocorticotrophic hormone.</title>
        <authorList>
            <person name="Riniker B."/>
            <person name="Sieber P."/>
            <person name="Rittel W."/>
            <person name="Zuber H."/>
        </authorList>
    </citation>
    <scope>SEQUENCE REVISION (CORTICOTROPIN)</scope>
</reference>
<reference key="16">
    <citation type="journal article" date="1972" name="Helv. Chim. Acta">
        <title>Synthesis of the human adrenal cortex hormone (alpha-h-ACTH) with a revised amino-acid sequence.</title>
        <authorList>
            <person name="Sieber P."/>
            <person name="Rittel W."/>
            <person name="Riniker B."/>
        </authorList>
    </citation>
    <scope>SYNTHESIS OF CORTICOTROPIN</scope>
</reference>
<reference key="17">
    <citation type="journal article" date="1973" name="J. Am. Chem. Soc.">
        <title>Adrenocorticotropins. 44. Total synthesis of the human hormone by the solid-phase method.</title>
        <authorList>
            <person name="Yamashiro D."/>
            <person name="Li C.H."/>
        </authorList>
    </citation>
    <scope>SYNTHESIS OF CORTICOTROPIN</scope>
</reference>
<reference key="18">
    <citation type="journal article" date="1976" name="Nature">
        <title>Primary structure of human beta-lipotropin.</title>
        <authorList>
            <person name="Li C.H."/>
            <person name="Chung D."/>
        </authorList>
    </citation>
    <scope>PROTEIN SEQUENCE OF 179-267</scope>
</reference>
<reference key="19">
    <citation type="journal article" date="1959" name="Nature">
        <title>Structure of a melanocyte-stimulating hormone from the human pituitary gland.</title>
        <authorList>
            <person name="Harris J.I."/>
        </authorList>
    </citation>
    <scope>PROTEIN SEQUENCE OF 217-234</scope>
</reference>
<reference key="20">
    <citation type="journal article" date="1977" name="Can. J. Biochem.">
        <title>Primary structure and morphine-like activity of human beta-endorphin.</title>
        <authorList>
            <person name="Dragon N."/>
            <person name="Seidah N.G."/>
            <person name="Lis M."/>
            <person name="Routhier R."/>
            <person name="Chretien M."/>
        </authorList>
    </citation>
    <scope>PROTEIN SEQUENCE OF 237-267</scope>
</reference>
<reference key="21">
    <citation type="journal article" date="1986" name="Brain Res.">
        <title>Gamma-endorphin and schizophrenia: amino acid composition of gamma-endorphin and nucleotide sequence of gamma-endorphin cDNA from pituitary glands of schizophrenic patients.</title>
        <authorList>
            <person name="Bovenberg R.A.L."/>
            <person name="Burbach J.P.H."/>
            <person name="Wiegant V.M."/>
            <person name="Veeneman G.H."/>
            <person name="van Boom J.H."/>
            <person name="Baas P.D."/>
            <person name="Jansz H.S."/>
            <person name="de Wied D."/>
        </authorList>
    </citation>
    <scope>NUCLEOTIDE SEQUENCE [MRNA] OF 235-256</scope>
</reference>
<reference key="22">
    <citation type="journal article" date="1988" name="Biochem. J.">
        <title>Alpha-amidated peptides derived from pro-opiomelanocortin in normal human pituitary.</title>
        <authorList>
            <person name="Fenger M."/>
            <person name="Johnsen A.H."/>
        </authorList>
    </citation>
    <scope>PROTEOLYTIC PROCESSING</scope>
</reference>
<reference key="23">
    <citation type="journal article" date="1995" name="Endocrinology">
        <title>Reduced expression of a naturally deleted form of human proopiomelanocortin complementary deoxyribonucleic acid after transfection into Chinese hamster ovary cells.</title>
        <authorList>
            <person name="Morris J.C."/>
            <person name="Savva D."/>
            <person name="Lowry P.J."/>
        </authorList>
    </citation>
    <scope>NUCLEOTIDE SEQUENCE OF 75-104</scope>
    <scope>VARIANT 97-SER--GLY-99 DEL</scope>
    <source>
        <tissue>Pituitary</tissue>
    </source>
</reference>
<reference key="24">
    <citation type="journal article" date="1998" name="Nat. Genet.">
        <title>Severe early-onset obesity, adrenal insufficiency and red hair pigmentation caused by POMC mutations in humans.</title>
        <authorList>
            <person name="Krude H."/>
            <person name="Biebermann H."/>
            <person name="Luck W."/>
            <person name="Horn R."/>
            <person name="Brabant G."/>
            <person name="Grueters A."/>
        </authorList>
    </citation>
    <scope>INVOLVEMENT IN OBAIRH</scope>
</reference>
<reference key="25">
    <citation type="journal article" date="2005" name="Diabetes">
        <title>Association between common polymorphisms of the proopiomelanocortin gene and body fat distribution: a family study.</title>
        <authorList>
            <person name="Baker M."/>
            <person name="Gaukrodger N."/>
            <person name="Mayosi B.M."/>
            <person name="Imrie H."/>
            <person name="Farrall M."/>
            <person name="Watkins H."/>
            <person name="Connell J.M.C."/>
            <person name="Avery P.J."/>
            <person name="Keavney B."/>
        </authorList>
    </citation>
    <scope>INVOLVEMENT IN ABDOMINAL BODY FAT DISTRIBUTION</scope>
</reference>
<reference key="26">
    <citation type="journal article" date="2006" name="Pituitary">
        <title>Phosphoproteomic analysis of the human pituitary.</title>
        <authorList>
            <person name="Beranova-Giorgianni S."/>
            <person name="Zhao Y."/>
            <person name="Desiderio D.M."/>
            <person name="Giorgianni F."/>
        </authorList>
    </citation>
    <scope>PHOSPHORYLATION [LARGE SCALE ANALYSIS] AT SER-168</scope>
    <scope>IDENTIFICATION BY MASS SPECTROMETRY [LARGE SCALE ANALYSIS]</scope>
    <source>
        <tissue>Pituitary</tissue>
    </source>
</reference>
<reference key="27">
    <citation type="journal article" date="1998" name="J. Clin. Endocrinol. Metab.">
        <title>Systematic mutation screening of the pro-opiomelanocortin gene: identification of several genetic variants including three different insertions, one nonsense and two missense point mutations in probands of different weight extremes.</title>
        <authorList>
            <person name="Hinney A."/>
            <person name="Becker I."/>
            <person name="Heibult O."/>
            <person name="Nottebom K."/>
            <person name="Schmidt A."/>
            <person name="Ziegler A."/>
            <person name="Mayer H."/>
            <person name="Siegfried W."/>
            <person name="Blum W.F."/>
            <person name="Remschmidt H."/>
            <person name="Hebebrand J."/>
        </authorList>
    </citation>
    <scope>VARIANTS ASN-106; GLY-214 AND 97-SER--GLY-99 DEL</scope>
</reference>
<reference key="28">
    <citation type="journal article" date="1999" name="Int. J. Obes. Relat. Metab. Disord.">
        <title>Mutational analysis of the proopiomelanocortin gene in Caucasians with early onset obesity.</title>
        <authorList>
            <person name="Echwald S.M."/>
            <person name="Sorensen T.I."/>
            <person name="Andersen T."/>
            <person name="Tybjaerg-Hansen A."/>
            <person name="Clausen J.O."/>
            <person name="Pedersen O."/>
        </authorList>
    </citation>
    <scope>VARIANT GLN-236</scope>
</reference>
<reference key="29">
    <citation type="journal article" date="2001" name="Int. J. Obes. Relat. Metab. Disord.">
        <title>Molecular screening of the proopiomelanocortin (POMC) gene in Italian obese children: report of three new mutations.</title>
        <authorList>
            <person name="del Giudice E.M."/>
            <person name="Cirillo G."/>
            <person name="Santoro N."/>
            <person name="D'Urso L."/>
            <person name="Carbone M.T."/>
            <person name="Toro R.D."/>
            <person name="Perrone L."/>
        </authorList>
    </citation>
    <scope>VARIANTS THR-7; LEU-9; GLY-236 AND 97-SER--GLY-99 DEL</scope>
</reference>
<reference key="30">
    <citation type="journal article" date="2002" name="Hum. Mol. Genet.">
        <title>A missense mutation disrupting a dibasic prohormone processing site in pro-opiomelanocortin (POMC) increases susceptibility to early-onset obesity through a novel molecular mechanism.</title>
        <authorList>
            <person name="Challis B.G."/>
            <person name="Pritchard L.E."/>
            <person name="Creemers J.W.M."/>
            <person name="Delplanque J."/>
            <person name="Keogh J.M."/>
            <person name="Luan J."/>
            <person name="Wareham N.J."/>
            <person name="Yeo G.S.H."/>
            <person name="Bhattacharyya S."/>
            <person name="Froguel P."/>
            <person name="White A."/>
            <person name="Farooqi I.S."/>
            <person name="O'Rahilly S."/>
        </authorList>
    </citation>
    <scope>VARIANT GLY-236</scope>
    <scope>CHARACTERIZATION OF VARIANT GLY-236</scope>
    <scope>POSSIBLE INVOLVEMENT IN OBESITY</scope>
</reference>
<accession>P01189</accession>
<accession>P78442</accession>
<accession>Q53T23</accession>
<accession>Q9UD39</accession>
<accession>Q9UD40</accession>
<name>COLI_HUMAN</name>
<organism>
    <name type="scientific">Homo sapiens</name>
    <name type="common">Human</name>
    <dbReference type="NCBI Taxonomy" id="9606"/>
    <lineage>
        <taxon>Eukaryota</taxon>
        <taxon>Metazoa</taxon>
        <taxon>Chordata</taxon>
        <taxon>Craniata</taxon>
        <taxon>Vertebrata</taxon>
        <taxon>Euteleostomi</taxon>
        <taxon>Mammalia</taxon>
        <taxon>Eutheria</taxon>
        <taxon>Euarchontoglires</taxon>
        <taxon>Primates</taxon>
        <taxon>Haplorrhini</taxon>
        <taxon>Catarrhini</taxon>
        <taxon>Hominidae</taxon>
        <taxon>Homo</taxon>
    </lineage>
</organism>